<feature type="chain" id="PRO_1000011724" description="GTPase Der">
    <location>
        <begin position="1"/>
        <end position="452"/>
    </location>
</feature>
<feature type="domain" description="EngA-type G 1">
    <location>
        <begin position="9"/>
        <end position="170"/>
    </location>
</feature>
<feature type="domain" description="EngA-type G 2">
    <location>
        <begin position="185"/>
        <end position="362"/>
    </location>
</feature>
<feature type="domain" description="KH-like" evidence="1">
    <location>
        <begin position="363"/>
        <end position="448"/>
    </location>
</feature>
<feature type="binding site" evidence="1">
    <location>
        <begin position="15"/>
        <end position="22"/>
    </location>
    <ligand>
        <name>GTP</name>
        <dbReference type="ChEBI" id="CHEBI:37565"/>
        <label>1</label>
    </ligand>
</feature>
<feature type="binding site" evidence="1">
    <location>
        <begin position="62"/>
        <end position="66"/>
    </location>
    <ligand>
        <name>GTP</name>
        <dbReference type="ChEBI" id="CHEBI:37565"/>
        <label>1</label>
    </ligand>
</feature>
<feature type="binding site" evidence="1">
    <location>
        <begin position="124"/>
        <end position="127"/>
    </location>
    <ligand>
        <name>GTP</name>
        <dbReference type="ChEBI" id="CHEBI:37565"/>
        <label>1</label>
    </ligand>
</feature>
<feature type="binding site" evidence="1">
    <location>
        <begin position="191"/>
        <end position="198"/>
    </location>
    <ligand>
        <name>GTP</name>
        <dbReference type="ChEBI" id="CHEBI:37565"/>
        <label>2</label>
    </ligand>
</feature>
<feature type="binding site" evidence="1">
    <location>
        <begin position="238"/>
        <end position="242"/>
    </location>
    <ligand>
        <name>GTP</name>
        <dbReference type="ChEBI" id="CHEBI:37565"/>
        <label>2</label>
    </ligand>
</feature>
<feature type="binding site" evidence="1">
    <location>
        <begin position="303"/>
        <end position="306"/>
    </location>
    <ligand>
        <name>GTP</name>
        <dbReference type="ChEBI" id="CHEBI:37565"/>
        <label>2</label>
    </ligand>
</feature>
<reference key="1">
    <citation type="submission" date="2007-09" db="EMBL/GenBank/DDBJ databases">
        <title>Complete genome sequencing of Rickettsia bellii.</title>
        <authorList>
            <person name="Madan A."/>
            <person name="Lee H."/>
            <person name="Madan A."/>
            <person name="Yoon J.-G."/>
            <person name="Ryu G.-Y."/>
            <person name="Dasch G."/>
            <person name="Ereemeva M."/>
        </authorList>
    </citation>
    <scope>NUCLEOTIDE SEQUENCE [LARGE SCALE GENOMIC DNA]</scope>
    <source>
        <strain>OSU 85-389</strain>
    </source>
</reference>
<proteinExistence type="inferred from homology"/>
<protein>
    <recommendedName>
        <fullName evidence="1">GTPase Der</fullName>
    </recommendedName>
    <alternativeName>
        <fullName evidence="1">GTP-binding protein EngA</fullName>
    </alternativeName>
</protein>
<dbReference type="EMBL" id="CP000849">
    <property type="protein sequence ID" value="ABV79667.1"/>
    <property type="molecule type" value="Genomic_DNA"/>
</dbReference>
<dbReference type="SMR" id="A8GXR7"/>
<dbReference type="KEGG" id="rbo:A1I_06755"/>
<dbReference type="HOGENOM" id="CLU_016077_5_0_5"/>
<dbReference type="GO" id="GO:0005525">
    <property type="term" value="F:GTP binding"/>
    <property type="evidence" value="ECO:0007669"/>
    <property type="project" value="UniProtKB-UniRule"/>
</dbReference>
<dbReference type="GO" id="GO:0042254">
    <property type="term" value="P:ribosome biogenesis"/>
    <property type="evidence" value="ECO:0007669"/>
    <property type="project" value="UniProtKB-KW"/>
</dbReference>
<dbReference type="CDD" id="cd01894">
    <property type="entry name" value="EngA1"/>
    <property type="match status" value="1"/>
</dbReference>
<dbReference type="CDD" id="cd01895">
    <property type="entry name" value="EngA2"/>
    <property type="match status" value="1"/>
</dbReference>
<dbReference type="FunFam" id="3.30.300.20:FF:000004">
    <property type="entry name" value="GTPase Der"/>
    <property type="match status" value="1"/>
</dbReference>
<dbReference type="Gene3D" id="3.30.300.20">
    <property type="match status" value="1"/>
</dbReference>
<dbReference type="Gene3D" id="3.40.50.300">
    <property type="entry name" value="P-loop containing nucleotide triphosphate hydrolases"/>
    <property type="match status" value="2"/>
</dbReference>
<dbReference type="HAMAP" id="MF_00195">
    <property type="entry name" value="GTPase_Der"/>
    <property type="match status" value="1"/>
</dbReference>
<dbReference type="InterPro" id="IPR031166">
    <property type="entry name" value="G_ENGA"/>
</dbReference>
<dbReference type="InterPro" id="IPR006073">
    <property type="entry name" value="GTP-bd"/>
</dbReference>
<dbReference type="InterPro" id="IPR016484">
    <property type="entry name" value="GTPase_Der"/>
</dbReference>
<dbReference type="InterPro" id="IPR032859">
    <property type="entry name" value="KH_dom-like"/>
</dbReference>
<dbReference type="InterPro" id="IPR015946">
    <property type="entry name" value="KH_dom-like_a/b"/>
</dbReference>
<dbReference type="InterPro" id="IPR027417">
    <property type="entry name" value="P-loop_NTPase"/>
</dbReference>
<dbReference type="InterPro" id="IPR005225">
    <property type="entry name" value="Small_GTP-bd"/>
</dbReference>
<dbReference type="NCBIfam" id="TIGR03594">
    <property type="entry name" value="GTPase_EngA"/>
    <property type="match status" value="1"/>
</dbReference>
<dbReference type="NCBIfam" id="TIGR00231">
    <property type="entry name" value="small_GTP"/>
    <property type="match status" value="2"/>
</dbReference>
<dbReference type="PANTHER" id="PTHR43834">
    <property type="entry name" value="GTPASE DER"/>
    <property type="match status" value="1"/>
</dbReference>
<dbReference type="PANTHER" id="PTHR43834:SF6">
    <property type="entry name" value="GTPASE DER"/>
    <property type="match status" value="1"/>
</dbReference>
<dbReference type="Pfam" id="PF14714">
    <property type="entry name" value="KH_dom-like"/>
    <property type="match status" value="1"/>
</dbReference>
<dbReference type="Pfam" id="PF01926">
    <property type="entry name" value="MMR_HSR1"/>
    <property type="match status" value="2"/>
</dbReference>
<dbReference type="PIRSF" id="PIRSF006485">
    <property type="entry name" value="GTP-binding_EngA"/>
    <property type="match status" value="1"/>
</dbReference>
<dbReference type="PRINTS" id="PR00326">
    <property type="entry name" value="GTP1OBG"/>
</dbReference>
<dbReference type="SUPFAM" id="SSF52540">
    <property type="entry name" value="P-loop containing nucleoside triphosphate hydrolases"/>
    <property type="match status" value="2"/>
</dbReference>
<dbReference type="PROSITE" id="PS51712">
    <property type="entry name" value="G_ENGA"/>
    <property type="match status" value="2"/>
</dbReference>
<organism>
    <name type="scientific">Rickettsia bellii (strain OSU 85-389)</name>
    <dbReference type="NCBI Taxonomy" id="391896"/>
    <lineage>
        <taxon>Bacteria</taxon>
        <taxon>Pseudomonadati</taxon>
        <taxon>Pseudomonadota</taxon>
        <taxon>Alphaproteobacteria</taxon>
        <taxon>Rickettsiales</taxon>
        <taxon>Rickettsiaceae</taxon>
        <taxon>Rickettsieae</taxon>
        <taxon>Rickettsia</taxon>
        <taxon>belli group</taxon>
    </lineage>
</organism>
<comment type="function">
    <text evidence="1">GTPase that plays an essential role in the late steps of ribosome biogenesis.</text>
</comment>
<comment type="subunit">
    <text evidence="1">Associates with the 50S ribosomal subunit.</text>
</comment>
<comment type="similarity">
    <text evidence="1">Belongs to the TRAFAC class TrmE-Era-EngA-EngB-Septin-like GTPase superfamily. EngA (Der) GTPase family.</text>
</comment>
<gene>
    <name evidence="1" type="primary">der</name>
    <name type="synonym">engA</name>
    <name type="ordered locus">A1I_06755</name>
</gene>
<sequence length="452" mass="51145">MTKKIIAKKIIALVGRPNVGKSTLFNRLSMRKKAIVHDLPGVTRDRKYTDGRIGSFEFSLIDTPGFEENPDSFGKRLMEQTTKAINEADLICFMVDSRSGILPDDKLLSDFVRKYNKPAVLVINKCEKAFDFDKEYYKLGFDSMVAISAEHGTGMIDLYDEIIAKLPEEDSAEAEIHDPIKGDCLQIVVSGRPNAGKSTFINALINDERLLTGPEAGITRESIEIDWQYKGNHIKLIDTAGLRKKATITESLEKLSASDAINSIKFANTVILMIDALSPLKQQDLNIASHVANEGRSIVIVVNKWDLIKESEKEAFKEEFYYQINTTLPQVKGVPALFISAKNKQNIADVLDSCIKIYKTWNKKITTSKLNEWLNFTTEAHPLPLQKGGKRVRVKYMTQTKTRPPTFKLFSNNPEKITDSYTRYLVNNMREAFDMPGVPIRFNYIKTKNPYV</sequence>
<name>DER_RICB8</name>
<accession>A8GXR7</accession>
<keyword id="KW-0342">GTP-binding</keyword>
<keyword id="KW-0547">Nucleotide-binding</keyword>
<keyword id="KW-0677">Repeat</keyword>
<keyword id="KW-0690">Ribosome biogenesis</keyword>
<evidence type="ECO:0000255" key="1">
    <source>
        <dbReference type="HAMAP-Rule" id="MF_00195"/>
    </source>
</evidence>